<dbReference type="EC" id="3.4.25.2" evidence="1"/>
<dbReference type="EMBL" id="CP000235">
    <property type="protein sequence ID" value="ABD43358.1"/>
    <property type="molecule type" value="Genomic_DNA"/>
</dbReference>
<dbReference type="RefSeq" id="WP_011451137.1">
    <property type="nucleotide sequence ID" value="NC_007797.1"/>
</dbReference>
<dbReference type="SMR" id="Q2GJ25"/>
<dbReference type="STRING" id="212042.APH_1073"/>
<dbReference type="MEROPS" id="T01.006"/>
<dbReference type="PaxDb" id="212042-APH_1073"/>
<dbReference type="EnsemblBacteria" id="ABD43358">
    <property type="protein sequence ID" value="ABD43358"/>
    <property type="gene ID" value="APH_1073"/>
</dbReference>
<dbReference type="GeneID" id="92748010"/>
<dbReference type="KEGG" id="aph:APH_1073"/>
<dbReference type="eggNOG" id="COG5405">
    <property type="taxonomic scope" value="Bacteria"/>
</dbReference>
<dbReference type="HOGENOM" id="CLU_093872_1_0_5"/>
<dbReference type="Proteomes" id="UP000001943">
    <property type="component" value="Chromosome"/>
</dbReference>
<dbReference type="GO" id="GO:0009376">
    <property type="term" value="C:HslUV protease complex"/>
    <property type="evidence" value="ECO:0007669"/>
    <property type="project" value="UniProtKB-UniRule"/>
</dbReference>
<dbReference type="GO" id="GO:0005839">
    <property type="term" value="C:proteasome core complex"/>
    <property type="evidence" value="ECO:0007669"/>
    <property type="project" value="InterPro"/>
</dbReference>
<dbReference type="GO" id="GO:0046872">
    <property type="term" value="F:metal ion binding"/>
    <property type="evidence" value="ECO:0007669"/>
    <property type="project" value="UniProtKB-KW"/>
</dbReference>
<dbReference type="GO" id="GO:0004298">
    <property type="term" value="F:threonine-type endopeptidase activity"/>
    <property type="evidence" value="ECO:0007669"/>
    <property type="project" value="UniProtKB-KW"/>
</dbReference>
<dbReference type="GO" id="GO:0051603">
    <property type="term" value="P:proteolysis involved in protein catabolic process"/>
    <property type="evidence" value="ECO:0007669"/>
    <property type="project" value="InterPro"/>
</dbReference>
<dbReference type="CDD" id="cd01913">
    <property type="entry name" value="protease_HslV"/>
    <property type="match status" value="1"/>
</dbReference>
<dbReference type="Gene3D" id="3.60.20.10">
    <property type="entry name" value="Glutamine Phosphoribosylpyrophosphate, subunit 1, domain 1"/>
    <property type="match status" value="1"/>
</dbReference>
<dbReference type="HAMAP" id="MF_00248">
    <property type="entry name" value="HslV"/>
    <property type="match status" value="1"/>
</dbReference>
<dbReference type="InterPro" id="IPR022281">
    <property type="entry name" value="ATP-dep_Prtase_HsIV_su"/>
</dbReference>
<dbReference type="InterPro" id="IPR029055">
    <property type="entry name" value="Ntn_hydrolases_N"/>
</dbReference>
<dbReference type="InterPro" id="IPR001353">
    <property type="entry name" value="Proteasome_sua/b"/>
</dbReference>
<dbReference type="InterPro" id="IPR023333">
    <property type="entry name" value="Proteasome_suB-type"/>
</dbReference>
<dbReference type="NCBIfam" id="TIGR03692">
    <property type="entry name" value="ATP_dep_HslV"/>
    <property type="match status" value="1"/>
</dbReference>
<dbReference type="NCBIfam" id="NF003964">
    <property type="entry name" value="PRK05456.1"/>
    <property type="match status" value="1"/>
</dbReference>
<dbReference type="PANTHER" id="PTHR32194:SF7">
    <property type="entry name" value="ATP-DEPENDENT PROTEASE SUBUNIT HSLV"/>
    <property type="match status" value="1"/>
</dbReference>
<dbReference type="PANTHER" id="PTHR32194">
    <property type="entry name" value="METALLOPROTEASE TLDD"/>
    <property type="match status" value="1"/>
</dbReference>
<dbReference type="Pfam" id="PF00227">
    <property type="entry name" value="Proteasome"/>
    <property type="match status" value="1"/>
</dbReference>
<dbReference type="PIRSF" id="PIRSF039093">
    <property type="entry name" value="HslV"/>
    <property type="match status" value="1"/>
</dbReference>
<dbReference type="SUPFAM" id="SSF56235">
    <property type="entry name" value="N-terminal nucleophile aminohydrolases (Ntn hydrolases)"/>
    <property type="match status" value="1"/>
</dbReference>
<dbReference type="PROSITE" id="PS51476">
    <property type="entry name" value="PROTEASOME_BETA_2"/>
    <property type="match status" value="1"/>
</dbReference>
<reference key="1">
    <citation type="journal article" date="2006" name="PLoS Genet.">
        <title>Comparative genomics of emerging human ehrlichiosis agents.</title>
        <authorList>
            <person name="Dunning Hotopp J.C."/>
            <person name="Lin M."/>
            <person name="Madupu R."/>
            <person name="Crabtree J."/>
            <person name="Angiuoli S.V."/>
            <person name="Eisen J.A."/>
            <person name="Seshadri R."/>
            <person name="Ren Q."/>
            <person name="Wu M."/>
            <person name="Utterback T.R."/>
            <person name="Smith S."/>
            <person name="Lewis M."/>
            <person name="Khouri H."/>
            <person name="Zhang C."/>
            <person name="Niu H."/>
            <person name="Lin Q."/>
            <person name="Ohashi N."/>
            <person name="Zhi N."/>
            <person name="Nelson W.C."/>
            <person name="Brinkac L.M."/>
            <person name="Dodson R.J."/>
            <person name="Rosovitz M.J."/>
            <person name="Sundaram J.P."/>
            <person name="Daugherty S.C."/>
            <person name="Davidsen T."/>
            <person name="Durkin A.S."/>
            <person name="Gwinn M.L."/>
            <person name="Haft D.H."/>
            <person name="Selengut J.D."/>
            <person name="Sullivan S.A."/>
            <person name="Zafar N."/>
            <person name="Zhou L."/>
            <person name="Benahmed F."/>
            <person name="Forberger H."/>
            <person name="Halpin R."/>
            <person name="Mulligan S."/>
            <person name="Robinson J."/>
            <person name="White O."/>
            <person name="Rikihisa Y."/>
            <person name="Tettelin H."/>
        </authorList>
    </citation>
    <scope>NUCLEOTIDE SEQUENCE [LARGE SCALE GENOMIC DNA]</scope>
    <source>
        <strain>HZ</strain>
    </source>
</reference>
<keyword id="KW-0021">Allosteric enzyme</keyword>
<keyword id="KW-0963">Cytoplasm</keyword>
<keyword id="KW-0378">Hydrolase</keyword>
<keyword id="KW-0479">Metal-binding</keyword>
<keyword id="KW-0645">Protease</keyword>
<keyword id="KW-0915">Sodium</keyword>
<keyword id="KW-0888">Threonine protease</keyword>
<organism>
    <name type="scientific">Anaplasma phagocytophilum (strain HZ)</name>
    <dbReference type="NCBI Taxonomy" id="212042"/>
    <lineage>
        <taxon>Bacteria</taxon>
        <taxon>Pseudomonadati</taxon>
        <taxon>Pseudomonadota</taxon>
        <taxon>Alphaproteobacteria</taxon>
        <taxon>Rickettsiales</taxon>
        <taxon>Anaplasmataceae</taxon>
        <taxon>Anaplasma</taxon>
        <taxon>phagocytophilum group</taxon>
    </lineage>
</organism>
<proteinExistence type="inferred from homology"/>
<comment type="function">
    <text evidence="1">Protease subunit of a proteasome-like degradation complex believed to be a general protein degrading machinery.</text>
</comment>
<comment type="catalytic activity">
    <reaction evidence="1">
        <text>ATP-dependent cleavage of peptide bonds with broad specificity.</text>
        <dbReference type="EC" id="3.4.25.2"/>
    </reaction>
</comment>
<comment type="activity regulation">
    <text evidence="1">Allosterically activated by HslU binding.</text>
</comment>
<comment type="subunit">
    <text evidence="1">A double ring-shaped homohexamer of HslV is capped on each side by a ring-shaped HslU homohexamer. The assembly of the HslU/HslV complex is dependent on binding of ATP.</text>
</comment>
<comment type="subcellular location">
    <subcellularLocation>
        <location evidence="1">Cytoplasm</location>
    </subcellularLocation>
</comment>
<comment type="similarity">
    <text evidence="1">Belongs to the peptidase T1B family. HslV subfamily.</text>
</comment>
<name>HSLV_ANAPZ</name>
<evidence type="ECO:0000255" key="1">
    <source>
        <dbReference type="HAMAP-Rule" id="MF_00248"/>
    </source>
</evidence>
<gene>
    <name evidence="1" type="primary">hslV</name>
    <name type="ordered locus">APH_1073</name>
</gene>
<sequence>MDHTDDRKMYGTTILSIRRGNSVIVAGDGQVTLGSTIMKTSARKIKRLASNTVITGFAGATADAFTLFERLEGKLEKHPGQLMRACVELAKDWRQDKYLRRLEAMMIVADKSVSLVISGGGDVLEPENGIAAIGSGGNLALAAARALCAAQDEFAPAMPLEYIVAKSMAIAAEICIYTNNNIVMEKIEG</sequence>
<protein>
    <recommendedName>
        <fullName evidence="1">ATP-dependent protease subunit HslV</fullName>
        <ecNumber evidence="1">3.4.25.2</ecNumber>
    </recommendedName>
</protein>
<accession>Q2GJ25</accession>
<feature type="chain" id="PRO_1000012574" description="ATP-dependent protease subunit HslV">
    <location>
        <begin position="1"/>
        <end position="189"/>
    </location>
</feature>
<feature type="active site" evidence="1">
    <location>
        <position position="12"/>
    </location>
</feature>
<feature type="binding site" evidence="1">
    <location>
        <position position="172"/>
    </location>
    <ligand>
        <name>Na(+)</name>
        <dbReference type="ChEBI" id="CHEBI:29101"/>
    </ligand>
</feature>
<feature type="binding site" evidence="1">
    <location>
        <position position="175"/>
    </location>
    <ligand>
        <name>Na(+)</name>
        <dbReference type="ChEBI" id="CHEBI:29101"/>
    </ligand>
</feature>
<feature type="binding site" evidence="1">
    <location>
        <position position="178"/>
    </location>
    <ligand>
        <name>Na(+)</name>
        <dbReference type="ChEBI" id="CHEBI:29101"/>
    </ligand>
</feature>